<feature type="chain" id="PRO_1000071512" description="DNA mismatch repair protein MutL">
    <location>
        <begin position="1"/>
        <end position="598"/>
    </location>
</feature>
<sequence>MSIQVLSDVLISQIAAGEVVERPAAALKEILENSLDAGATAIDVELEQGGVKRIRVSDDGVGIPRDELALALTRHATSKIATLADLEQVASLGFRGEALASIASVARVRLTSRHAGSDHAWTIHVDGGPLQPSSPAARSGGTTIDIEDMFFNTPARRKFLKTEATEYAHCAETVRRLALAWPQVAFTLVHNGRAQLRLKAEAAAARVRHVLGEVFEQHAIAVDAAAGALRLSGWVVRPVAATASRDAQHVFVNGRYVRDKLIVHALREAYRDVLHHQLNPAYCLFVELPPEHVDVNVHPAKTEIRFRDSRGVHQFLYHAVERLLAAPVAPAAPPSGPDARPPTFLQPRQAAMSLQVEEAMAFYAPFAAMAPGEGDEARHVPQASAAGLAGRAGPPRAFASDSSAVPPLGYALGQLHGVYVLAQNAHGLVLVDMHAAHERVVYEKLKTALDRRAVPAQALLIPVALTADPREVAEIAPHLDQLREIGFELSITSPNSVAVRAVPSLLKNADPVELTRAILAEIAEFGVARLLAERRNELLATLACHGAVRAHRTLSVPEMNALLREMEATERAGQCNHGRPTWFQLRLDELDAMFMRGR</sequence>
<evidence type="ECO:0000255" key="1">
    <source>
        <dbReference type="HAMAP-Rule" id="MF_00149"/>
    </source>
</evidence>
<dbReference type="EMBL" id="CP000116">
    <property type="protein sequence ID" value="AAZ97470.1"/>
    <property type="molecule type" value="Genomic_DNA"/>
</dbReference>
<dbReference type="RefSeq" id="WP_011312029.1">
    <property type="nucleotide sequence ID" value="NC_007404.1"/>
</dbReference>
<dbReference type="SMR" id="Q3SIQ5"/>
<dbReference type="STRING" id="292415.Tbd_1517"/>
<dbReference type="KEGG" id="tbd:Tbd_1517"/>
<dbReference type="eggNOG" id="COG0323">
    <property type="taxonomic scope" value="Bacteria"/>
</dbReference>
<dbReference type="HOGENOM" id="CLU_004131_4_2_4"/>
<dbReference type="OrthoDB" id="9763467at2"/>
<dbReference type="Proteomes" id="UP000008291">
    <property type="component" value="Chromosome"/>
</dbReference>
<dbReference type="GO" id="GO:0032300">
    <property type="term" value="C:mismatch repair complex"/>
    <property type="evidence" value="ECO:0007669"/>
    <property type="project" value="InterPro"/>
</dbReference>
<dbReference type="GO" id="GO:0005524">
    <property type="term" value="F:ATP binding"/>
    <property type="evidence" value="ECO:0007669"/>
    <property type="project" value="InterPro"/>
</dbReference>
<dbReference type="GO" id="GO:0016887">
    <property type="term" value="F:ATP hydrolysis activity"/>
    <property type="evidence" value="ECO:0007669"/>
    <property type="project" value="InterPro"/>
</dbReference>
<dbReference type="GO" id="GO:0140664">
    <property type="term" value="F:ATP-dependent DNA damage sensor activity"/>
    <property type="evidence" value="ECO:0007669"/>
    <property type="project" value="InterPro"/>
</dbReference>
<dbReference type="GO" id="GO:0030983">
    <property type="term" value="F:mismatched DNA binding"/>
    <property type="evidence" value="ECO:0007669"/>
    <property type="project" value="InterPro"/>
</dbReference>
<dbReference type="GO" id="GO:0006298">
    <property type="term" value="P:mismatch repair"/>
    <property type="evidence" value="ECO:0007669"/>
    <property type="project" value="UniProtKB-UniRule"/>
</dbReference>
<dbReference type="CDD" id="cd16926">
    <property type="entry name" value="HATPase_MutL-MLH-PMS-like"/>
    <property type="match status" value="1"/>
</dbReference>
<dbReference type="CDD" id="cd03482">
    <property type="entry name" value="MutL_Trans_MutL"/>
    <property type="match status" value="1"/>
</dbReference>
<dbReference type="FunFam" id="3.30.565.10:FF:000003">
    <property type="entry name" value="DNA mismatch repair endonuclease MutL"/>
    <property type="match status" value="1"/>
</dbReference>
<dbReference type="Gene3D" id="3.30.230.10">
    <property type="match status" value="1"/>
</dbReference>
<dbReference type="Gene3D" id="3.30.565.10">
    <property type="entry name" value="Histidine kinase-like ATPase, C-terminal domain"/>
    <property type="match status" value="1"/>
</dbReference>
<dbReference type="Gene3D" id="3.30.1540.20">
    <property type="entry name" value="MutL, C-terminal domain, dimerisation subdomain"/>
    <property type="match status" value="1"/>
</dbReference>
<dbReference type="Gene3D" id="3.30.1370.100">
    <property type="entry name" value="MutL, C-terminal domain, regulatory subdomain"/>
    <property type="match status" value="1"/>
</dbReference>
<dbReference type="HAMAP" id="MF_00149">
    <property type="entry name" value="DNA_mis_repair"/>
    <property type="match status" value="1"/>
</dbReference>
<dbReference type="InterPro" id="IPR014762">
    <property type="entry name" value="DNA_mismatch_repair_CS"/>
</dbReference>
<dbReference type="InterPro" id="IPR020667">
    <property type="entry name" value="DNA_mismatch_repair_MutL"/>
</dbReference>
<dbReference type="InterPro" id="IPR013507">
    <property type="entry name" value="DNA_mismatch_S5_2-like"/>
</dbReference>
<dbReference type="InterPro" id="IPR036890">
    <property type="entry name" value="HATPase_C_sf"/>
</dbReference>
<dbReference type="InterPro" id="IPR002099">
    <property type="entry name" value="MutL/Mlh/PMS"/>
</dbReference>
<dbReference type="InterPro" id="IPR038973">
    <property type="entry name" value="MutL/Mlh/Pms-like"/>
</dbReference>
<dbReference type="InterPro" id="IPR014790">
    <property type="entry name" value="MutL_C"/>
</dbReference>
<dbReference type="InterPro" id="IPR042120">
    <property type="entry name" value="MutL_C_dimsub"/>
</dbReference>
<dbReference type="InterPro" id="IPR042121">
    <property type="entry name" value="MutL_C_regsub"/>
</dbReference>
<dbReference type="InterPro" id="IPR037198">
    <property type="entry name" value="MutL_C_sf"/>
</dbReference>
<dbReference type="InterPro" id="IPR020568">
    <property type="entry name" value="Ribosomal_Su5_D2-typ_SF"/>
</dbReference>
<dbReference type="InterPro" id="IPR014721">
    <property type="entry name" value="Ribsml_uS5_D2-typ_fold_subgr"/>
</dbReference>
<dbReference type="NCBIfam" id="TIGR00585">
    <property type="entry name" value="mutl"/>
    <property type="match status" value="1"/>
</dbReference>
<dbReference type="PANTHER" id="PTHR10073">
    <property type="entry name" value="DNA MISMATCH REPAIR PROTEIN MLH, PMS, MUTL"/>
    <property type="match status" value="1"/>
</dbReference>
<dbReference type="PANTHER" id="PTHR10073:SF12">
    <property type="entry name" value="DNA MISMATCH REPAIR PROTEIN MLH1"/>
    <property type="match status" value="1"/>
</dbReference>
<dbReference type="Pfam" id="PF01119">
    <property type="entry name" value="DNA_mis_repair"/>
    <property type="match status" value="1"/>
</dbReference>
<dbReference type="Pfam" id="PF13589">
    <property type="entry name" value="HATPase_c_3"/>
    <property type="match status" value="1"/>
</dbReference>
<dbReference type="Pfam" id="PF08676">
    <property type="entry name" value="MutL_C"/>
    <property type="match status" value="1"/>
</dbReference>
<dbReference type="SMART" id="SM01340">
    <property type="entry name" value="DNA_mis_repair"/>
    <property type="match status" value="1"/>
</dbReference>
<dbReference type="SMART" id="SM00853">
    <property type="entry name" value="MutL_C"/>
    <property type="match status" value="1"/>
</dbReference>
<dbReference type="SUPFAM" id="SSF55874">
    <property type="entry name" value="ATPase domain of HSP90 chaperone/DNA topoisomerase II/histidine kinase"/>
    <property type="match status" value="1"/>
</dbReference>
<dbReference type="SUPFAM" id="SSF118116">
    <property type="entry name" value="DNA mismatch repair protein MutL"/>
    <property type="match status" value="1"/>
</dbReference>
<dbReference type="SUPFAM" id="SSF54211">
    <property type="entry name" value="Ribosomal protein S5 domain 2-like"/>
    <property type="match status" value="1"/>
</dbReference>
<dbReference type="PROSITE" id="PS00058">
    <property type="entry name" value="DNA_MISMATCH_REPAIR_1"/>
    <property type="match status" value="1"/>
</dbReference>
<accession>Q3SIQ5</accession>
<comment type="function">
    <text evidence="1">This protein is involved in the repair of mismatches in DNA. It is required for dam-dependent methyl-directed DNA mismatch repair. May act as a 'molecular matchmaker', a protein that promotes the formation of a stable complex between two or more DNA-binding proteins in an ATP-dependent manner without itself being part of a final effector complex.</text>
</comment>
<comment type="similarity">
    <text evidence="1">Belongs to the DNA mismatch repair MutL/HexB family.</text>
</comment>
<organism>
    <name type="scientific">Thiobacillus denitrificans (strain ATCC 25259 / T1)</name>
    <dbReference type="NCBI Taxonomy" id="292415"/>
    <lineage>
        <taxon>Bacteria</taxon>
        <taxon>Pseudomonadati</taxon>
        <taxon>Pseudomonadota</taxon>
        <taxon>Betaproteobacteria</taxon>
        <taxon>Nitrosomonadales</taxon>
        <taxon>Thiobacillaceae</taxon>
        <taxon>Thiobacillus</taxon>
    </lineage>
</organism>
<reference key="1">
    <citation type="journal article" date="2006" name="J. Bacteriol.">
        <title>The genome sequence of the obligately chemolithoautotrophic, facultatively anaerobic bacterium Thiobacillus denitrificans.</title>
        <authorList>
            <person name="Beller H.R."/>
            <person name="Chain P.S."/>
            <person name="Letain T.E."/>
            <person name="Chakicherla A."/>
            <person name="Larimer F.W."/>
            <person name="Richardson P.M."/>
            <person name="Coleman M.A."/>
            <person name="Wood A.P."/>
            <person name="Kelly D.P."/>
        </authorList>
    </citation>
    <scope>NUCLEOTIDE SEQUENCE [LARGE SCALE GENOMIC DNA]</scope>
    <source>
        <strain>ATCC 25259 / T1</strain>
    </source>
</reference>
<gene>
    <name evidence="1" type="primary">mutL</name>
    <name type="ordered locus">Tbd_1517</name>
</gene>
<protein>
    <recommendedName>
        <fullName evidence="1">DNA mismatch repair protein MutL</fullName>
    </recommendedName>
</protein>
<keyword id="KW-0227">DNA damage</keyword>
<keyword id="KW-0234">DNA repair</keyword>
<keyword id="KW-1185">Reference proteome</keyword>
<name>MUTL_THIDA</name>
<proteinExistence type="inferred from homology"/>